<accession>P48500</accession>
<accession>A0JN18</accession>
<accession>Q6P793</accession>
<keyword id="KW-0007">Acetylation</keyword>
<keyword id="KW-0963">Cytoplasm</keyword>
<keyword id="KW-0903">Direct protein sequencing</keyword>
<keyword id="KW-0312">Gluconeogenesis</keyword>
<keyword id="KW-0324">Glycolysis</keyword>
<keyword id="KW-0413">Isomerase</keyword>
<keyword id="KW-1017">Isopeptide bond</keyword>
<keyword id="KW-0456">Lyase</keyword>
<keyword id="KW-0488">Methylation</keyword>
<keyword id="KW-0944">Nitration</keyword>
<keyword id="KW-0597">Phosphoprotein</keyword>
<keyword id="KW-1185">Reference proteome</keyword>
<keyword id="KW-0832">Ubl conjugation</keyword>
<feature type="initiator methionine" description="Removed" evidence="3">
    <location>
        <position position="1"/>
    </location>
</feature>
<feature type="chain" id="PRO_0000090120" description="Triosephosphate isomerase">
    <location>
        <begin position="2"/>
        <end position="249"/>
    </location>
</feature>
<feature type="active site" description="Electrophile" evidence="4">
    <location>
        <position position="96"/>
    </location>
</feature>
<feature type="active site" description="Proton acceptor" evidence="4">
    <location>
        <position position="166"/>
    </location>
</feature>
<feature type="binding site" evidence="4">
    <location>
        <position position="12"/>
    </location>
    <ligand>
        <name>substrate</name>
    </ligand>
</feature>
<feature type="binding site" evidence="4">
    <location>
        <position position="14"/>
    </location>
    <ligand>
        <name>substrate</name>
    </ligand>
</feature>
<feature type="modified residue" description="N6-acetyllysine" evidence="3">
    <location>
        <position position="14"/>
    </location>
</feature>
<feature type="modified residue" description="3'-nitrotyrosine" evidence="2">
    <location>
        <position position="68"/>
    </location>
</feature>
<feature type="modified residue" description="Phosphoserine" evidence="3">
    <location>
        <position position="80"/>
    </location>
</feature>
<feature type="modified residue" description="Phosphoserine" evidence="6">
    <location>
        <position position="106"/>
    </location>
</feature>
<feature type="modified residue" description="N6-succinyllysine" evidence="2">
    <location>
        <position position="149"/>
    </location>
</feature>
<feature type="modified residue" description="N6-acetyllysine; alternate" evidence="2">
    <location>
        <position position="156"/>
    </location>
</feature>
<feature type="modified residue" description="N6-succinyllysine; alternate" evidence="2">
    <location>
        <position position="156"/>
    </location>
</feature>
<feature type="modified residue" description="Phosphothreonine" evidence="2">
    <location>
        <position position="173"/>
    </location>
</feature>
<feature type="modified residue" description="N6-acetyllysine; alternate" evidence="3">
    <location>
        <position position="194"/>
    </location>
</feature>
<feature type="modified residue" description="N6-methyllysine; alternate" evidence="3">
    <location>
        <position position="194"/>
    </location>
</feature>
<feature type="modified residue" description="N6-succinyllysine; alternate" evidence="2">
    <location>
        <position position="194"/>
    </location>
</feature>
<feature type="modified residue" description="Phosphoserine" evidence="6">
    <location>
        <position position="198"/>
    </location>
</feature>
<feature type="modified residue" description="3'-nitrotyrosine" evidence="2">
    <location>
        <position position="209"/>
    </location>
</feature>
<feature type="modified residue" description="Phosphoserine" evidence="3">
    <location>
        <position position="212"/>
    </location>
</feature>
<feature type="modified residue" description="Phosphothreonine" evidence="3">
    <location>
        <position position="214"/>
    </location>
</feature>
<feature type="modified residue" description="Phosphoserine" evidence="3">
    <location>
        <position position="223"/>
    </location>
</feature>
<feature type="modified residue" description="N6-acetyllysine" evidence="3">
    <location>
        <position position="238"/>
    </location>
</feature>
<feature type="cross-link" description="Glycyl lysine isopeptide (Lys-Gly) (interchain with G-Cter in SUMO1)" evidence="3">
    <location>
        <position position="142"/>
    </location>
</feature>
<feature type="sequence conflict" description="In Ref. 1; AAA42278." evidence="5" ref="1">
    <original>G</original>
    <variation>E</variation>
    <location>
        <position position="123"/>
    </location>
</feature>
<organism>
    <name type="scientific">Rattus norvegicus</name>
    <name type="common">Rat</name>
    <dbReference type="NCBI Taxonomy" id="10116"/>
    <lineage>
        <taxon>Eukaryota</taxon>
        <taxon>Metazoa</taxon>
        <taxon>Chordata</taxon>
        <taxon>Craniata</taxon>
        <taxon>Vertebrata</taxon>
        <taxon>Euteleostomi</taxon>
        <taxon>Mammalia</taxon>
        <taxon>Eutheria</taxon>
        <taxon>Euarchontoglires</taxon>
        <taxon>Glires</taxon>
        <taxon>Rodentia</taxon>
        <taxon>Myomorpha</taxon>
        <taxon>Muroidea</taxon>
        <taxon>Muridae</taxon>
        <taxon>Murinae</taxon>
        <taxon>Rattus</taxon>
    </lineage>
</organism>
<gene>
    <name type="primary">Tpi1</name>
</gene>
<name>TPIS_RAT</name>
<sequence>MAPSRKFFVGGNWKMNGRKKCLGELICTLNAAKLPADTEVVCAPPTAYIDFARQKLDPKIAVAAQNCYKVTNGAFTGEISPGMIKDLGATWVVLGHSERRHIFGESDELIGQKVNHALSEGLGVIACIGEKLDEREAGITEKVVFEQTKAIADNVKDWCKVVLAYEPVWAIGTGKTATPQQAQEVHEKLRGWLKCNVSEGVAQCTRIIYGGSVTGATCKELASQPDVDGFLVGGASLKPEFVDIINAKQ</sequence>
<protein>
    <recommendedName>
        <fullName>Triosephosphate isomerase</fullName>
        <shortName>TIM</shortName>
        <ecNumber evidence="4">5.3.1.1</ecNumber>
    </recommendedName>
    <alternativeName>
        <fullName evidence="1">Methylglyoxal synthase</fullName>
        <ecNumber evidence="1">4.2.3.3</ecNumber>
    </alternativeName>
    <alternativeName>
        <fullName>Triose-phosphate isomerase</fullName>
    </alternativeName>
</protein>
<evidence type="ECO:0000250" key="1">
    <source>
        <dbReference type="UniProtKB" id="P00939"/>
    </source>
</evidence>
<evidence type="ECO:0000250" key="2">
    <source>
        <dbReference type="UniProtKB" id="P17751"/>
    </source>
</evidence>
<evidence type="ECO:0000250" key="3">
    <source>
        <dbReference type="UniProtKB" id="P60174"/>
    </source>
</evidence>
<evidence type="ECO:0000255" key="4">
    <source>
        <dbReference type="PROSITE-ProRule" id="PRU10127"/>
    </source>
</evidence>
<evidence type="ECO:0000305" key="5"/>
<evidence type="ECO:0007744" key="6">
    <source>
    </source>
</evidence>
<dbReference type="EC" id="5.3.1.1" evidence="4"/>
<dbReference type="EC" id="4.2.3.3" evidence="1"/>
<dbReference type="EMBL" id="L36250">
    <property type="protein sequence ID" value="AAA42278.1"/>
    <property type="molecule type" value="mRNA"/>
</dbReference>
<dbReference type="EMBL" id="BC061781">
    <property type="protein sequence ID" value="AAH61781.1"/>
    <property type="molecule type" value="mRNA"/>
</dbReference>
<dbReference type="EMBL" id="BC126087">
    <property type="protein sequence ID" value="AAI26088.1"/>
    <property type="molecule type" value="mRNA"/>
</dbReference>
<dbReference type="RefSeq" id="NP_075211.2">
    <property type="nucleotide sequence ID" value="NM_022922.2"/>
</dbReference>
<dbReference type="SMR" id="P48500"/>
<dbReference type="BioGRID" id="246967">
    <property type="interactions" value="8"/>
</dbReference>
<dbReference type="CORUM" id="P48500"/>
<dbReference type="FunCoup" id="P48500">
    <property type="interactions" value="1684"/>
</dbReference>
<dbReference type="IntAct" id="P48500">
    <property type="interactions" value="4"/>
</dbReference>
<dbReference type="MINT" id="P48500"/>
<dbReference type="STRING" id="10116.ENSRNOP00000020647"/>
<dbReference type="ChEMBL" id="CHEMBL2176801"/>
<dbReference type="GlyGen" id="P48500">
    <property type="glycosylation" value="1 site, 1 O-linked glycan (1 site)"/>
</dbReference>
<dbReference type="iPTMnet" id="P48500"/>
<dbReference type="PhosphoSitePlus" id="P48500"/>
<dbReference type="jPOST" id="P48500"/>
<dbReference type="PaxDb" id="10116-ENSRNOP00000020647"/>
<dbReference type="GeneID" id="24849"/>
<dbReference type="KEGG" id="rno:24849"/>
<dbReference type="UCSC" id="RGD:3896">
    <property type="organism name" value="rat"/>
</dbReference>
<dbReference type="AGR" id="RGD:3896"/>
<dbReference type="CTD" id="7167"/>
<dbReference type="RGD" id="3896">
    <property type="gene designation" value="Tpi1"/>
</dbReference>
<dbReference type="VEuPathDB" id="HostDB:ENSRNOG00000015290"/>
<dbReference type="eggNOG" id="KOG1643">
    <property type="taxonomic scope" value="Eukaryota"/>
</dbReference>
<dbReference type="HOGENOM" id="CLU_024251_2_0_1"/>
<dbReference type="InParanoid" id="P48500"/>
<dbReference type="OrthoDB" id="5741at9989"/>
<dbReference type="PhylomeDB" id="P48500"/>
<dbReference type="TreeFam" id="TF300829"/>
<dbReference type="Reactome" id="R-RNO-70171">
    <property type="pathway name" value="Glycolysis"/>
</dbReference>
<dbReference type="Reactome" id="R-RNO-70263">
    <property type="pathway name" value="Gluconeogenesis"/>
</dbReference>
<dbReference type="SABIO-RK" id="P48500"/>
<dbReference type="UniPathway" id="UPA00109">
    <property type="reaction ID" value="UER00189"/>
</dbReference>
<dbReference type="UniPathway" id="UPA00138"/>
<dbReference type="PRO" id="PR:P48500"/>
<dbReference type="Proteomes" id="UP000002494">
    <property type="component" value="Chromosome 4"/>
</dbReference>
<dbReference type="Bgee" id="ENSRNOG00000015290">
    <property type="expression patterns" value="Expressed in quadriceps femoris and 20 other cell types or tissues"/>
</dbReference>
<dbReference type="ExpressionAtlas" id="P48500">
    <property type="expression patterns" value="baseline"/>
</dbReference>
<dbReference type="GO" id="GO:0005829">
    <property type="term" value="C:cytosol"/>
    <property type="evidence" value="ECO:0000266"/>
    <property type="project" value="RGD"/>
</dbReference>
<dbReference type="GO" id="GO:0016853">
    <property type="term" value="F:isomerase activity"/>
    <property type="evidence" value="ECO:0000266"/>
    <property type="project" value="RGD"/>
</dbReference>
<dbReference type="GO" id="GO:0008929">
    <property type="term" value="F:methylglyoxal synthase activity"/>
    <property type="evidence" value="ECO:0000250"/>
    <property type="project" value="UniProtKB"/>
</dbReference>
<dbReference type="GO" id="GO:0042803">
    <property type="term" value="F:protein homodimerization activity"/>
    <property type="evidence" value="ECO:0000250"/>
    <property type="project" value="UniProtKB"/>
</dbReference>
<dbReference type="GO" id="GO:0004807">
    <property type="term" value="F:triose-phosphate isomerase activity"/>
    <property type="evidence" value="ECO:0000314"/>
    <property type="project" value="RGD"/>
</dbReference>
<dbReference type="GO" id="GO:0031625">
    <property type="term" value="F:ubiquitin protein ligase binding"/>
    <property type="evidence" value="ECO:0000266"/>
    <property type="project" value="RGD"/>
</dbReference>
<dbReference type="GO" id="GO:0061621">
    <property type="term" value="P:canonical glycolysis"/>
    <property type="evidence" value="ECO:0000266"/>
    <property type="project" value="RGD"/>
</dbReference>
<dbReference type="GO" id="GO:0006094">
    <property type="term" value="P:gluconeogenesis"/>
    <property type="evidence" value="ECO:0000266"/>
    <property type="project" value="RGD"/>
</dbReference>
<dbReference type="GO" id="GO:0006006">
    <property type="term" value="P:glucose metabolic process"/>
    <property type="evidence" value="ECO:0000266"/>
    <property type="project" value="RGD"/>
</dbReference>
<dbReference type="GO" id="GO:0046166">
    <property type="term" value="P:glyceraldehyde-3-phosphate biosynthetic process"/>
    <property type="evidence" value="ECO:0000250"/>
    <property type="project" value="UniProtKB"/>
</dbReference>
<dbReference type="GO" id="GO:0019682">
    <property type="term" value="P:glyceraldehyde-3-phosphate metabolic process"/>
    <property type="evidence" value="ECO:0000266"/>
    <property type="project" value="RGD"/>
</dbReference>
<dbReference type="GO" id="GO:0019563">
    <property type="term" value="P:glycerol catabolic process"/>
    <property type="evidence" value="ECO:0000318"/>
    <property type="project" value="GO_Central"/>
</dbReference>
<dbReference type="GO" id="GO:0006096">
    <property type="term" value="P:glycolytic process"/>
    <property type="evidence" value="ECO:0000318"/>
    <property type="project" value="GO_Central"/>
</dbReference>
<dbReference type="GO" id="GO:0019242">
    <property type="term" value="P:methylglyoxal biosynthetic process"/>
    <property type="evidence" value="ECO:0000250"/>
    <property type="project" value="UniProtKB"/>
</dbReference>
<dbReference type="CDD" id="cd00311">
    <property type="entry name" value="TIM"/>
    <property type="match status" value="1"/>
</dbReference>
<dbReference type="FunFam" id="3.20.20.70:FF:000025">
    <property type="entry name" value="Triosephosphate isomerase"/>
    <property type="match status" value="1"/>
</dbReference>
<dbReference type="Gene3D" id="3.20.20.70">
    <property type="entry name" value="Aldolase class I"/>
    <property type="match status" value="1"/>
</dbReference>
<dbReference type="HAMAP" id="MF_00147_B">
    <property type="entry name" value="TIM_B"/>
    <property type="match status" value="1"/>
</dbReference>
<dbReference type="InterPro" id="IPR013785">
    <property type="entry name" value="Aldolase_TIM"/>
</dbReference>
<dbReference type="InterPro" id="IPR035990">
    <property type="entry name" value="TIM_sf"/>
</dbReference>
<dbReference type="InterPro" id="IPR022896">
    <property type="entry name" value="TrioseP_Isoase_bac/euk"/>
</dbReference>
<dbReference type="InterPro" id="IPR000652">
    <property type="entry name" value="Triosephosphate_isomerase"/>
</dbReference>
<dbReference type="InterPro" id="IPR020861">
    <property type="entry name" value="Triosephosphate_isomerase_AS"/>
</dbReference>
<dbReference type="NCBIfam" id="TIGR00419">
    <property type="entry name" value="tim"/>
    <property type="match status" value="1"/>
</dbReference>
<dbReference type="PANTHER" id="PTHR21139">
    <property type="entry name" value="TRIOSEPHOSPHATE ISOMERASE"/>
    <property type="match status" value="1"/>
</dbReference>
<dbReference type="PANTHER" id="PTHR21139:SF2">
    <property type="entry name" value="TRIOSEPHOSPHATE ISOMERASE"/>
    <property type="match status" value="1"/>
</dbReference>
<dbReference type="Pfam" id="PF00121">
    <property type="entry name" value="TIM"/>
    <property type="match status" value="1"/>
</dbReference>
<dbReference type="SUPFAM" id="SSF51351">
    <property type="entry name" value="Triosephosphate isomerase (TIM)"/>
    <property type="match status" value="1"/>
</dbReference>
<dbReference type="PROSITE" id="PS00171">
    <property type="entry name" value="TIM_1"/>
    <property type="match status" value="1"/>
</dbReference>
<dbReference type="PROSITE" id="PS51440">
    <property type="entry name" value="TIM_2"/>
    <property type="match status" value="1"/>
</dbReference>
<proteinExistence type="evidence at protein level"/>
<comment type="function">
    <text evidence="1">Triosephosphate isomerase is an extremely efficient metabolic enzyme that catalyzes the interconversion between dihydroxyacetone phosphate (DHAP) and D-glyceraldehyde-3-phosphate (G3P) in glycolysis and gluconeogenesis.</text>
</comment>
<comment type="function">
    <text evidence="1">It is also responsible for the non-negligible production of methylglyoxal a reactive cytotoxic side-product that modifies and can alter proteins, DNA and lipids.</text>
</comment>
<comment type="catalytic activity">
    <reaction evidence="1">
        <text>dihydroxyacetone phosphate = methylglyoxal + phosphate</text>
        <dbReference type="Rhea" id="RHEA:17937"/>
        <dbReference type="ChEBI" id="CHEBI:17158"/>
        <dbReference type="ChEBI" id="CHEBI:43474"/>
        <dbReference type="ChEBI" id="CHEBI:57642"/>
        <dbReference type="EC" id="4.2.3.3"/>
    </reaction>
</comment>
<comment type="catalytic activity">
    <reaction evidence="4">
        <text>D-glyceraldehyde 3-phosphate = dihydroxyacetone phosphate</text>
        <dbReference type="Rhea" id="RHEA:18585"/>
        <dbReference type="ChEBI" id="CHEBI:57642"/>
        <dbReference type="ChEBI" id="CHEBI:59776"/>
        <dbReference type="EC" id="5.3.1.1"/>
    </reaction>
</comment>
<comment type="pathway">
    <text evidence="4">Carbohydrate degradation; glycolysis; D-glyceraldehyde 3-phosphate from glycerone phosphate: step 1/1.</text>
</comment>
<comment type="pathway">
    <text evidence="4">Carbohydrate biosynthesis; gluconeogenesis.</text>
</comment>
<comment type="subunit">
    <text evidence="4">Homodimer.</text>
</comment>
<comment type="subcellular location">
    <subcellularLocation>
        <location evidence="4">Cytoplasm</location>
    </subcellularLocation>
</comment>
<comment type="similarity">
    <text evidence="5">Belongs to the triosephosphate isomerase family.</text>
</comment>
<reference key="1">
    <citation type="submission" date="1994-09" db="EMBL/GenBank/DDBJ databases">
        <authorList>
            <person name="Yoon K.L."/>
            <person name="Guidotti G."/>
        </authorList>
    </citation>
    <scope>NUCLEOTIDE SEQUENCE [MRNA]</scope>
    <source>
        <strain>Sprague-Dawley</strain>
    </source>
</reference>
<reference key="2">
    <citation type="journal article" date="2004" name="Genome Res.">
        <title>The status, quality, and expansion of the NIH full-length cDNA project: the Mammalian Gene Collection (MGC).</title>
        <authorList>
            <consortium name="The MGC Project Team"/>
        </authorList>
    </citation>
    <scope>NUCLEOTIDE SEQUENCE [LARGE SCALE MRNA]</scope>
    <source>
        <tissue>Brain</tissue>
        <tissue>Prostate</tissue>
    </source>
</reference>
<reference key="3">
    <citation type="submission" date="2009-01" db="UniProtKB">
        <authorList>
            <person name="Lubec G."/>
            <person name="Afjehi-Sadat L."/>
            <person name="Chen W.-Q."/>
        </authorList>
    </citation>
    <scope>PROTEIN SEQUENCE OF 6-14; 34-53; 60-131; 136-188 AND 195-248</scope>
    <scope>IDENTIFICATION BY MASS SPECTROMETRY</scope>
    <source>
        <strain>Sprague-Dawley</strain>
        <tissue>Hippocampus</tissue>
        <tissue>Spinal cord</tissue>
    </source>
</reference>
<reference key="4">
    <citation type="journal article" date="2012" name="Nat. Commun.">
        <title>Quantitative maps of protein phosphorylation sites across 14 different rat organs and tissues.</title>
        <authorList>
            <person name="Lundby A."/>
            <person name="Secher A."/>
            <person name="Lage K."/>
            <person name="Nordsborg N.B."/>
            <person name="Dmytriyev A."/>
            <person name="Lundby C."/>
            <person name="Olsen J.V."/>
        </authorList>
    </citation>
    <scope>PHOSPHORYLATION [LARGE SCALE ANALYSIS] AT SER-106 AND SER-198</scope>
    <scope>IDENTIFICATION BY MASS SPECTROMETRY [LARGE SCALE ANALYSIS]</scope>
</reference>